<keyword id="KW-0028">Amino-acid biosynthesis</keyword>
<keyword id="KW-0067">ATP-binding</keyword>
<keyword id="KW-0963">Cytoplasm</keyword>
<keyword id="KW-0418">Kinase</keyword>
<keyword id="KW-0547">Nucleotide-binding</keyword>
<keyword id="KW-0641">Proline biosynthesis</keyword>
<keyword id="KW-0808">Transferase</keyword>
<name>PROB_BRUMB</name>
<accession>C0RF93</accession>
<sequence length="378" mass="39874">MLKKLKDYRRIVVKIGSALLVDRATGLKREWLESLGQDIAALQHAGVEVLVVSSGAIALGRTVLGLPKKALKLEESQAAAAAGQIALAKAYADVLGGHGIKSGQILVTLSDTEERRRYLNARATIETLLKLKAVPIINENDTVATTEIRYGDNDRLAARVATMMGADLLILLSDIDGLYTAPPHKNPDAQFLPFVETITPQIEAMAGAAASELSRGGMKTKLDAGKIANAAGTAMIITSGTRFGPLSAIDRGERATLFEAAHAPVNAWKTWISGNLEPAGRLTVDAGAVKALKSGKSLLPAGVKEVDGDFERGDTVAVMNEDGREIARGLIAYDAADARKVAGHKSDEISAILGYDARAAMIHRNDLVVRAASDAKAA</sequence>
<organism>
    <name type="scientific">Brucella melitensis biotype 2 (strain ATCC 23457)</name>
    <dbReference type="NCBI Taxonomy" id="546272"/>
    <lineage>
        <taxon>Bacteria</taxon>
        <taxon>Pseudomonadati</taxon>
        <taxon>Pseudomonadota</taxon>
        <taxon>Alphaproteobacteria</taxon>
        <taxon>Hyphomicrobiales</taxon>
        <taxon>Brucellaceae</taxon>
        <taxon>Brucella/Ochrobactrum group</taxon>
        <taxon>Brucella</taxon>
    </lineage>
</organism>
<reference key="1">
    <citation type="submission" date="2009-03" db="EMBL/GenBank/DDBJ databases">
        <title>Brucella melitensis ATCC 23457 whole genome shotgun sequencing project.</title>
        <authorList>
            <person name="Setubal J.C."/>
            <person name="Boyle S."/>
            <person name="Crasta O.R."/>
            <person name="Gillespie J.J."/>
            <person name="Kenyon R.W."/>
            <person name="Lu J."/>
            <person name="Mane S."/>
            <person name="Nagrani S."/>
            <person name="Shallom J.M."/>
            <person name="Shallom S."/>
            <person name="Shukla M."/>
            <person name="Snyder E.E."/>
            <person name="Sobral B.W."/>
            <person name="Wattam A.R."/>
            <person name="Will R."/>
            <person name="Williams K."/>
            <person name="Yoo H."/>
            <person name="Munk C."/>
            <person name="Tapia R."/>
            <person name="Han C."/>
            <person name="Detter J.C."/>
            <person name="Bruce D."/>
            <person name="Brettin T.S."/>
        </authorList>
    </citation>
    <scope>NUCLEOTIDE SEQUENCE [LARGE SCALE GENOMIC DNA]</scope>
    <source>
        <strain>ATCC 23457</strain>
    </source>
</reference>
<gene>
    <name evidence="1" type="primary">proB</name>
    <name type="ordered locus">BMEA_A1894</name>
</gene>
<dbReference type="EC" id="2.7.2.11" evidence="1"/>
<dbReference type="EMBL" id="CP001488">
    <property type="protein sequence ID" value="ACO01565.1"/>
    <property type="molecule type" value="Genomic_DNA"/>
</dbReference>
<dbReference type="RefSeq" id="WP_004684325.1">
    <property type="nucleotide sequence ID" value="NC_012441.1"/>
</dbReference>
<dbReference type="SMR" id="C0RF93"/>
<dbReference type="GeneID" id="97533036"/>
<dbReference type="KEGG" id="bmi:BMEA_A1894"/>
<dbReference type="HOGENOM" id="CLU_025400_2_0_5"/>
<dbReference type="UniPathway" id="UPA00098">
    <property type="reaction ID" value="UER00359"/>
</dbReference>
<dbReference type="Proteomes" id="UP000001748">
    <property type="component" value="Chromosome I"/>
</dbReference>
<dbReference type="GO" id="GO:0005829">
    <property type="term" value="C:cytosol"/>
    <property type="evidence" value="ECO:0007669"/>
    <property type="project" value="TreeGrafter"/>
</dbReference>
<dbReference type="GO" id="GO:0005524">
    <property type="term" value="F:ATP binding"/>
    <property type="evidence" value="ECO:0007669"/>
    <property type="project" value="UniProtKB-KW"/>
</dbReference>
<dbReference type="GO" id="GO:0004349">
    <property type="term" value="F:glutamate 5-kinase activity"/>
    <property type="evidence" value="ECO:0007669"/>
    <property type="project" value="UniProtKB-UniRule"/>
</dbReference>
<dbReference type="GO" id="GO:0003723">
    <property type="term" value="F:RNA binding"/>
    <property type="evidence" value="ECO:0007669"/>
    <property type="project" value="InterPro"/>
</dbReference>
<dbReference type="GO" id="GO:0055129">
    <property type="term" value="P:L-proline biosynthetic process"/>
    <property type="evidence" value="ECO:0007669"/>
    <property type="project" value="UniProtKB-UniRule"/>
</dbReference>
<dbReference type="CDD" id="cd04242">
    <property type="entry name" value="AAK_G5K_ProB"/>
    <property type="match status" value="1"/>
</dbReference>
<dbReference type="CDD" id="cd21157">
    <property type="entry name" value="PUA_G5K"/>
    <property type="match status" value="1"/>
</dbReference>
<dbReference type="FunFam" id="2.30.130.10:FF:000007">
    <property type="entry name" value="Glutamate 5-kinase"/>
    <property type="match status" value="1"/>
</dbReference>
<dbReference type="FunFam" id="3.40.1160.10:FF:000018">
    <property type="entry name" value="Glutamate 5-kinase"/>
    <property type="match status" value="1"/>
</dbReference>
<dbReference type="Gene3D" id="3.40.1160.10">
    <property type="entry name" value="Acetylglutamate kinase-like"/>
    <property type="match status" value="1"/>
</dbReference>
<dbReference type="Gene3D" id="2.30.130.10">
    <property type="entry name" value="PUA domain"/>
    <property type="match status" value="1"/>
</dbReference>
<dbReference type="HAMAP" id="MF_00456">
    <property type="entry name" value="ProB"/>
    <property type="match status" value="1"/>
</dbReference>
<dbReference type="InterPro" id="IPR036393">
    <property type="entry name" value="AceGlu_kinase-like_sf"/>
</dbReference>
<dbReference type="InterPro" id="IPR001048">
    <property type="entry name" value="Asp/Glu/Uridylate_kinase"/>
</dbReference>
<dbReference type="InterPro" id="IPR041739">
    <property type="entry name" value="G5K_ProB"/>
</dbReference>
<dbReference type="InterPro" id="IPR001057">
    <property type="entry name" value="Glu/AcGlu_kinase"/>
</dbReference>
<dbReference type="InterPro" id="IPR011529">
    <property type="entry name" value="Glu_5kinase"/>
</dbReference>
<dbReference type="InterPro" id="IPR005715">
    <property type="entry name" value="Glu_5kinase/COase_Synthase"/>
</dbReference>
<dbReference type="InterPro" id="IPR019797">
    <property type="entry name" value="Glutamate_5-kinase_CS"/>
</dbReference>
<dbReference type="InterPro" id="IPR002478">
    <property type="entry name" value="PUA"/>
</dbReference>
<dbReference type="InterPro" id="IPR015947">
    <property type="entry name" value="PUA-like_sf"/>
</dbReference>
<dbReference type="InterPro" id="IPR036974">
    <property type="entry name" value="PUA_sf"/>
</dbReference>
<dbReference type="NCBIfam" id="TIGR01027">
    <property type="entry name" value="proB"/>
    <property type="match status" value="1"/>
</dbReference>
<dbReference type="PANTHER" id="PTHR43654">
    <property type="entry name" value="GLUTAMATE 5-KINASE"/>
    <property type="match status" value="1"/>
</dbReference>
<dbReference type="PANTHER" id="PTHR43654:SF1">
    <property type="entry name" value="ISOPENTENYL PHOSPHATE KINASE"/>
    <property type="match status" value="1"/>
</dbReference>
<dbReference type="Pfam" id="PF00696">
    <property type="entry name" value="AA_kinase"/>
    <property type="match status" value="1"/>
</dbReference>
<dbReference type="Pfam" id="PF01472">
    <property type="entry name" value="PUA"/>
    <property type="match status" value="1"/>
</dbReference>
<dbReference type="PIRSF" id="PIRSF000729">
    <property type="entry name" value="GK"/>
    <property type="match status" value="1"/>
</dbReference>
<dbReference type="PRINTS" id="PR00474">
    <property type="entry name" value="GLU5KINASE"/>
</dbReference>
<dbReference type="SMART" id="SM00359">
    <property type="entry name" value="PUA"/>
    <property type="match status" value="1"/>
</dbReference>
<dbReference type="SUPFAM" id="SSF53633">
    <property type="entry name" value="Carbamate kinase-like"/>
    <property type="match status" value="1"/>
</dbReference>
<dbReference type="SUPFAM" id="SSF88697">
    <property type="entry name" value="PUA domain-like"/>
    <property type="match status" value="1"/>
</dbReference>
<dbReference type="PROSITE" id="PS00902">
    <property type="entry name" value="GLUTAMATE_5_KINASE"/>
    <property type="match status" value="1"/>
</dbReference>
<dbReference type="PROSITE" id="PS50890">
    <property type="entry name" value="PUA"/>
    <property type="match status" value="1"/>
</dbReference>
<feature type="chain" id="PRO_1000193689" description="Glutamate 5-kinase">
    <location>
        <begin position="1"/>
        <end position="378"/>
    </location>
</feature>
<feature type="domain" description="PUA" evidence="1">
    <location>
        <begin position="279"/>
        <end position="356"/>
    </location>
</feature>
<feature type="binding site" evidence="1">
    <location>
        <position position="14"/>
    </location>
    <ligand>
        <name>ATP</name>
        <dbReference type="ChEBI" id="CHEBI:30616"/>
    </ligand>
</feature>
<feature type="binding site" evidence="1">
    <location>
        <position position="54"/>
    </location>
    <ligand>
        <name>substrate</name>
    </ligand>
</feature>
<feature type="binding site" evidence="1">
    <location>
        <position position="141"/>
    </location>
    <ligand>
        <name>substrate</name>
    </ligand>
</feature>
<feature type="binding site" evidence="1">
    <location>
        <position position="153"/>
    </location>
    <ligand>
        <name>substrate</name>
    </ligand>
</feature>
<feature type="binding site" evidence="1">
    <location>
        <begin position="173"/>
        <end position="174"/>
    </location>
    <ligand>
        <name>ATP</name>
        <dbReference type="ChEBI" id="CHEBI:30616"/>
    </ligand>
</feature>
<comment type="function">
    <text evidence="1">Catalyzes the transfer of a phosphate group to glutamate to form L-glutamate 5-phosphate.</text>
</comment>
<comment type="catalytic activity">
    <reaction evidence="1">
        <text>L-glutamate + ATP = L-glutamyl 5-phosphate + ADP</text>
        <dbReference type="Rhea" id="RHEA:14877"/>
        <dbReference type="ChEBI" id="CHEBI:29985"/>
        <dbReference type="ChEBI" id="CHEBI:30616"/>
        <dbReference type="ChEBI" id="CHEBI:58274"/>
        <dbReference type="ChEBI" id="CHEBI:456216"/>
        <dbReference type="EC" id="2.7.2.11"/>
    </reaction>
</comment>
<comment type="pathway">
    <text evidence="1">Amino-acid biosynthesis; L-proline biosynthesis; L-glutamate 5-semialdehyde from L-glutamate: step 1/2.</text>
</comment>
<comment type="subcellular location">
    <subcellularLocation>
        <location evidence="1">Cytoplasm</location>
    </subcellularLocation>
</comment>
<comment type="similarity">
    <text evidence="1">Belongs to the glutamate 5-kinase family.</text>
</comment>
<proteinExistence type="inferred from homology"/>
<protein>
    <recommendedName>
        <fullName evidence="1">Glutamate 5-kinase</fullName>
        <ecNumber evidence="1">2.7.2.11</ecNumber>
    </recommendedName>
    <alternativeName>
        <fullName evidence="1">Gamma-glutamyl kinase</fullName>
        <shortName evidence="1">GK</shortName>
    </alternativeName>
</protein>
<evidence type="ECO:0000255" key="1">
    <source>
        <dbReference type="HAMAP-Rule" id="MF_00456"/>
    </source>
</evidence>